<feature type="chain" id="PRO_1000088491" description="Urease subunit alpha">
    <location>
        <begin position="1"/>
        <end position="573"/>
    </location>
</feature>
<feature type="active site" description="Proton donor" evidence="1">
    <location>
        <position position="325"/>
    </location>
</feature>
<feature type="binding site" evidence="1">
    <location>
        <position position="139"/>
    </location>
    <ligand>
        <name>Ni(2+)</name>
        <dbReference type="ChEBI" id="CHEBI:49786"/>
        <label>1</label>
    </ligand>
</feature>
<feature type="binding site" evidence="1">
    <location>
        <position position="141"/>
    </location>
    <ligand>
        <name>Ni(2+)</name>
        <dbReference type="ChEBI" id="CHEBI:49786"/>
        <label>1</label>
    </ligand>
</feature>
<feature type="binding site" description="via carbamate group" evidence="1">
    <location>
        <position position="222"/>
    </location>
    <ligand>
        <name>Ni(2+)</name>
        <dbReference type="ChEBI" id="CHEBI:49786"/>
        <label>1</label>
    </ligand>
</feature>
<feature type="binding site" description="via carbamate group" evidence="1">
    <location>
        <position position="222"/>
    </location>
    <ligand>
        <name>Ni(2+)</name>
        <dbReference type="ChEBI" id="CHEBI:49786"/>
        <label>2</label>
    </ligand>
</feature>
<feature type="binding site" evidence="1">
    <location>
        <position position="224"/>
    </location>
    <ligand>
        <name>substrate</name>
    </ligand>
</feature>
<feature type="binding site" evidence="1">
    <location>
        <position position="251"/>
    </location>
    <ligand>
        <name>Ni(2+)</name>
        <dbReference type="ChEBI" id="CHEBI:49786"/>
        <label>2</label>
    </ligand>
</feature>
<feature type="binding site" evidence="1">
    <location>
        <position position="277"/>
    </location>
    <ligand>
        <name>Ni(2+)</name>
        <dbReference type="ChEBI" id="CHEBI:49786"/>
        <label>2</label>
    </ligand>
</feature>
<feature type="binding site" evidence="1">
    <location>
        <position position="365"/>
    </location>
    <ligand>
        <name>Ni(2+)</name>
        <dbReference type="ChEBI" id="CHEBI:49786"/>
        <label>1</label>
    </ligand>
</feature>
<feature type="modified residue" description="N6-carboxylysine" evidence="1">
    <location>
        <position position="222"/>
    </location>
</feature>
<comment type="catalytic activity">
    <reaction evidence="1">
        <text>urea + 2 H2O + H(+) = hydrogencarbonate + 2 NH4(+)</text>
        <dbReference type="Rhea" id="RHEA:20557"/>
        <dbReference type="ChEBI" id="CHEBI:15377"/>
        <dbReference type="ChEBI" id="CHEBI:15378"/>
        <dbReference type="ChEBI" id="CHEBI:16199"/>
        <dbReference type="ChEBI" id="CHEBI:17544"/>
        <dbReference type="ChEBI" id="CHEBI:28938"/>
        <dbReference type="EC" id="3.5.1.5"/>
    </reaction>
</comment>
<comment type="cofactor">
    <cofactor evidence="1">
        <name>Ni cation</name>
        <dbReference type="ChEBI" id="CHEBI:25516"/>
    </cofactor>
    <text evidence="1">Binds 2 nickel ions per subunit.</text>
</comment>
<comment type="pathway">
    <text evidence="1">Nitrogen metabolism; urea degradation; CO(2) and NH(3) from urea (urease route): step 1/1.</text>
</comment>
<comment type="subunit">
    <text evidence="1">Heterotrimer of UreA (gamma), UreB (beta) and UreC (alpha) subunits. Three heterotrimers associate to form the active enzyme.</text>
</comment>
<comment type="subcellular location">
    <subcellularLocation>
        <location evidence="1">Cytoplasm</location>
    </subcellularLocation>
</comment>
<comment type="PTM">
    <text evidence="1">Carboxylation allows a single lysine to coordinate two nickel ions.</text>
</comment>
<comment type="similarity">
    <text evidence="1">Belongs to the metallo-dependent hydrolases superfamily. Urease alpha subunit family.</text>
</comment>
<dbReference type="EC" id="3.5.1.5" evidence="1"/>
<dbReference type="EMBL" id="CP000685">
    <property type="protein sequence ID" value="ABQ07834.1"/>
    <property type="molecule type" value="Genomic_DNA"/>
</dbReference>
<dbReference type="RefSeq" id="WP_012026800.1">
    <property type="nucleotide sequence ID" value="NC_009441.1"/>
</dbReference>
<dbReference type="SMR" id="A5FAD1"/>
<dbReference type="STRING" id="376686.Fjoh_4835"/>
<dbReference type="KEGG" id="fjo:Fjoh_4835"/>
<dbReference type="eggNOG" id="COG0804">
    <property type="taxonomic scope" value="Bacteria"/>
</dbReference>
<dbReference type="HOGENOM" id="CLU_000980_0_0_10"/>
<dbReference type="OrthoDB" id="9802793at2"/>
<dbReference type="UniPathway" id="UPA00258">
    <property type="reaction ID" value="UER00370"/>
</dbReference>
<dbReference type="Proteomes" id="UP000006694">
    <property type="component" value="Chromosome"/>
</dbReference>
<dbReference type="GO" id="GO:0005737">
    <property type="term" value="C:cytoplasm"/>
    <property type="evidence" value="ECO:0007669"/>
    <property type="project" value="UniProtKB-SubCell"/>
</dbReference>
<dbReference type="GO" id="GO:0016151">
    <property type="term" value="F:nickel cation binding"/>
    <property type="evidence" value="ECO:0007669"/>
    <property type="project" value="UniProtKB-UniRule"/>
</dbReference>
<dbReference type="GO" id="GO:0009039">
    <property type="term" value="F:urease activity"/>
    <property type="evidence" value="ECO:0007669"/>
    <property type="project" value="UniProtKB-UniRule"/>
</dbReference>
<dbReference type="GO" id="GO:0043419">
    <property type="term" value="P:urea catabolic process"/>
    <property type="evidence" value="ECO:0007669"/>
    <property type="project" value="UniProtKB-UniRule"/>
</dbReference>
<dbReference type="CDD" id="cd00375">
    <property type="entry name" value="Urease_alpha"/>
    <property type="match status" value="1"/>
</dbReference>
<dbReference type="Gene3D" id="3.20.20.140">
    <property type="entry name" value="Metal-dependent hydrolases"/>
    <property type="match status" value="1"/>
</dbReference>
<dbReference type="Gene3D" id="2.30.40.10">
    <property type="entry name" value="Urease, subunit C, domain 1"/>
    <property type="match status" value="1"/>
</dbReference>
<dbReference type="HAMAP" id="MF_01953">
    <property type="entry name" value="Urease_alpha"/>
    <property type="match status" value="1"/>
</dbReference>
<dbReference type="InterPro" id="IPR006680">
    <property type="entry name" value="Amidohydro-rel"/>
</dbReference>
<dbReference type="InterPro" id="IPR011059">
    <property type="entry name" value="Metal-dep_hydrolase_composite"/>
</dbReference>
<dbReference type="InterPro" id="IPR032466">
    <property type="entry name" value="Metal_Hydrolase"/>
</dbReference>
<dbReference type="InterPro" id="IPR011612">
    <property type="entry name" value="Urease_alpha_N_dom"/>
</dbReference>
<dbReference type="InterPro" id="IPR050112">
    <property type="entry name" value="Urease_alpha_subunit"/>
</dbReference>
<dbReference type="InterPro" id="IPR017950">
    <property type="entry name" value="Urease_AS"/>
</dbReference>
<dbReference type="InterPro" id="IPR005848">
    <property type="entry name" value="Urease_asu"/>
</dbReference>
<dbReference type="InterPro" id="IPR017951">
    <property type="entry name" value="Urease_asu_c"/>
</dbReference>
<dbReference type="InterPro" id="IPR029754">
    <property type="entry name" value="Urease_Ni-bd"/>
</dbReference>
<dbReference type="NCBIfam" id="NF009685">
    <property type="entry name" value="PRK13206.1"/>
    <property type="match status" value="1"/>
</dbReference>
<dbReference type="NCBIfam" id="NF009686">
    <property type="entry name" value="PRK13207.1"/>
    <property type="match status" value="1"/>
</dbReference>
<dbReference type="NCBIfam" id="TIGR01792">
    <property type="entry name" value="urease_alph"/>
    <property type="match status" value="1"/>
</dbReference>
<dbReference type="PANTHER" id="PTHR43440">
    <property type="entry name" value="UREASE"/>
    <property type="match status" value="1"/>
</dbReference>
<dbReference type="PANTHER" id="PTHR43440:SF1">
    <property type="entry name" value="UREASE"/>
    <property type="match status" value="1"/>
</dbReference>
<dbReference type="Pfam" id="PF01979">
    <property type="entry name" value="Amidohydro_1"/>
    <property type="match status" value="1"/>
</dbReference>
<dbReference type="Pfam" id="PF00449">
    <property type="entry name" value="Urease_alpha"/>
    <property type="match status" value="1"/>
</dbReference>
<dbReference type="PRINTS" id="PR01752">
    <property type="entry name" value="UREASE"/>
</dbReference>
<dbReference type="SUPFAM" id="SSF51338">
    <property type="entry name" value="Composite domain of metallo-dependent hydrolases"/>
    <property type="match status" value="2"/>
</dbReference>
<dbReference type="SUPFAM" id="SSF51556">
    <property type="entry name" value="Metallo-dependent hydrolases"/>
    <property type="match status" value="1"/>
</dbReference>
<dbReference type="PROSITE" id="PS01120">
    <property type="entry name" value="UREASE_1"/>
    <property type="match status" value="1"/>
</dbReference>
<dbReference type="PROSITE" id="PS00145">
    <property type="entry name" value="UREASE_2"/>
    <property type="match status" value="1"/>
</dbReference>
<dbReference type="PROSITE" id="PS51368">
    <property type="entry name" value="UREASE_3"/>
    <property type="match status" value="1"/>
</dbReference>
<gene>
    <name evidence="1" type="primary">ureC</name>
    <name type="ordered locus">Fjoh_4835</name>
</gene>
<accession>A5FAD1</accession>
<organism>
    <name type="scientific">Flavobacterium johnsoniae (strain ATCC 17061 / DSM 2064 / JCM 8514 / BCRC 14874 / CCUG 350202 / NBRC 14942 / NCIMB 11054 / UW101)</name>
    <name type="common">Cytophaga johnsonae</name>
    <dbReference type="NCBI Taxonomy" id="376686"/>
    <lineage>
        <taxon>Bacteria</taxon>
        <taxon>Pseudomonadati</taxon>
        <taxon>Bacteroidota</taxon>
        <taxon>Flavobacteriia</taxon>
        <taxon>Flavobacteriales</taxon>
        <taxon>Flavobacteriaceae</taxon>
        <taxon>Flavobacterium</taxon>
    </lineage>
</organism>
<keyword id="KW-0963">Cytoplasm</keyword>
<keyword id="KW-0378">Hydrolase</keyword>
<keyword id="KW-0479">Metal-binding</keyword>
<keyword id="KW-0533">Nickel</keyword>
<protein>
    <recommendedName>
        <fullName evidence="1">Urease subunit alpha</fullName>
        <ecNumber evidence="1">3.5.1.5</ecNumber>
    </recommendedName>
    <alternativeName>
        <fullName evidence="1">Urea amidohydrolase subunit alpha</fullName>
    </alternativeName>
</protein>
<proteinExistence type="inferred from homology"/>
<name>URE1_FLAJ1</name>
<sequence>MSLKINKLKYASMYGPTKGDKIRLADTDIIVEIEKDFTVYGDENKFGGGKTIRDGMAQSSTATRDQGVLDLVITNATIIDHWGIVKADIGIKDGKIAGIGKAGNPDTMDGVEPHMIIGASTEAHGGENLIVTAGGIDTHIHFISPQQIETALYSGVTTMIGGGTGPADGTNATTITPGKWYIEKMLQAAEAFPMNLGFFGKGNCSTEAPLDEQIEAGALGLKIHEDWGASPAVIDASLKVADKYDVQVAIHTDTLNEAGFLEDTMNAINGRVIHTFHTEGAGGGHAPDIIKAAMYPNVLPASTNPTRPYTVNTIDEHLDMLMVCHHLSKNIPEDVSFADSRIRPETIAAEDILHDMGVFSIMSSDSQAMGRVGEVVTRTWQTADKMRKQRGDLAEDKGNKNDNFRAKRYVAKYTINPAIAHGISQYVGSIEVGKMADLVLWKPMLFGTKPEIIIKGGMIIAARMGDPNASIPTPQPVLYRNMFGAFGKALSKTCATFVSQASIKNNIAEEYGLEKMILPVTGCRNISKKHLIHNDKTPEITVNPENYEVRVDGEKIICEPATHLPMAQRYFLF</sequence>
<evidence type="ECO:0000255" key="1">
    <source>
        <dbReference type="HAMAP-Rule" id="MF_01953"/>
    </source>
</evidence>
<reference key="1">
    <citation type="journal article" date="2009" name="Appl. Environ. Microbiol.">
        <title>Novel features of the polysaccharide-digesting gliding bacterium Flavobacterium johnsoniae as revealed by genome sequence analysis.</title>
        <authorList>
            <person name="McBride M.J."/>
            <person name="Xie G."/>
            <person name="Martens E.C."/>
            <person name="Lapidus A."/>
            <person name="Henrissat B."/>
            <person name="Rhodes R.G."/>
            <person name="Goltsman E."/>
            <person name="Wang W."/>
            <person name="Xu J."/>
            <person name="Hunnicutt D.W."/>
            <person name="Staroscik A.M."/>
            <person name="Hoover T.R."/>
            <person name="Cheng Y.Q."/>
            <person name="Stein J.L."/>
        </authorList>
    </citation>
    <scope>NUCLEOTIDE SEQUENCE [LARGE SCALE GENOMIC DNA]</scope>
    <source>
        <strain>ATCC 17061 / DSM 2064 / JCM 8514 / BCRC 14874 / CCUG 350202 / NBRC 14942 / NCIMB 11054 / UW101</strain>
    </source>
</reference>